<proteinExistence type="evidence at protein level"/>
<name>CP7A1_RABIT</name>
<dbReference type="EC" id="1.14.14.26" evidence="1"/>
<dbReference type="EC" id="1.14.14.23" evidence="3"/>
<dbReference type="EMBL" id="L10754">
    <property type="protein sequence ID" value="AAA74382.1"/>
    <property type="molecule type" value="mRNA"/>
</dbReference>
<dbReference type="PIR" id="I46701">
    <property type="entry name" value="I46701"/>
</dbReference>
<dbReference type="RefSeq" id="NP_001164400.1">
    <property type="nucleotide sequence ID" value="NM_001170929.1"/>
</dbReference>
<dbReference type="SMR" id="P51542"/>
<dbReference type="FunCoup" id="P51542">
    <property type="interactions" value="192"/>
</dbReference>
<dbReference type="STRING" id="9986.ENSOCUP00000010572"/>
<dbReference type="PaxDb" id="9986-ENSOCUP00000010572"/>
<dbReference type="GeneID" id="100328551"/>
<dbReference type="KEGG" id="ocu:100328551"/>
<dbReference type="CTD" id="1581"/>
<dbReference type="eggNOG" id="KOG0684">
    <property type="taxonomic scope" value="Eukaryota"/>
</dbReference>
<dbReference type="InParanoid" id="P51542"/>
<dbReference type="OrthoDB" id="6692864at2759"/>
<dbReference type="UniPathway" id="UPA00221"/>
<dbReference type="UniPathway" id="UPA01058"/>
<dbReference type="Proteomes" id="UP000001811">
    <property type="component" value="Unplaced"/>
</dbReference>
<dbReference type="GO" id="GO:0005789">
    <property type="term" value="C:endoplasmic reticulum membrane"/>
    <property type="evidence" value="ECO:0007669"/>
    <property type="project" value="UniProtKB-SubCell"/>
</dbReference>
<dbReference type="GO" id="GO:0043231">
    <property type="term" value="C:intracellular membrane-bounded organelle"/>
    <property type="evidence" value="ECO:0000250"/>
    <property type="project" value="UniProtKB"/>
</dbReference>
<dbReference type="GO" id="GO:0033782">
    <property type="term" value="F:24S-hydroxycholesterol 7-alpha-hydroxylase activity"/>
    <property type="evidence" value="ECO:0007669"/>
    <property type="project" value="UniProtKB-EC"/>
</dbReference>
<dbReference type="GO" id="GO:0008123">
    <property type="term" value="F:cholesterol 7-alpha-monooxygenase activity"/>
    <property type="evidence" value="ECO:0000250"/>
    <property type="project" value="UniProtKB"/>
</dbReference>
<dbReference type="GO" id="GO:0020037">
    <property type="term" value="F:heme binding"/>
    <property type="evidence" value="ECO:0007669"/>
    <property type="project" value="InterPro"/>
</dbReference>
<dbReference type="GO" id="GO:0005506">
    <property type="term" value="F:iron ion binding"/>
    <property type="evidence" value="ECO:0007669"/>
    <property type="project" value="InterPro"/>
</dbReference>
<dbReference type="GO" id="GO:0006699">
    <property type="term" value="P:bile acid biosynthetic process"/>
    <property type="evidence" value="ECO:0000250"/>
    <property type="project" value="UniProtKB"/>
</dbReference>
<dbReference type="GO" id="GO:0071397">
    <property type="term" value="P:cellular response to cholesterol"/>
    <property type="evidence" value="ECO:0000250"/>
    <property type="project" value="UniProtKB"/>
</dbReference>
<dbReference type="GO" id="GO:0071333">
    <property type="term" value="P:cellular response to glucose stimulus"/>
    <property type="evidence" value="ECO:0000250"/>
    <property type="project" value="UniProtKB"/>
</dbReference>
<dbReference type="GO" id="GO:0006707">
    <property type="term" value="P:cholesterol catabolic process"/>
    <property type="evidence" value="ECO:0000250"/>
    <property type="project" value="UniProtKB"/>
</dbReference>
<dbReference type="GO" id="GO:0042632">
    <property type="term" value="P:cholesterol homeostasis"/>
    <property type="evidence" value="ECO:0000250"/>
    <property type="project" value="UniProtKB"/>
</dbReference>
<dbReference type="GO" id="GO:0070857">
    <property type="term" value="P:regulation of bile acid biosynthetic process"/>
    <property type="evidence" value="ECO:0000250"/>
    <property type="project" value="UniProtKB"/>
</dbReference>
<dbReference type="CDD" id="cd20631">
    <property type="entry name" value="CYP7A1"/>
    <property type="match status" value="1"/>
</dbReference>
<dbReference type="FunFam" id="1.10.630.10:FF:000034">
    <property type="entry name" value="Cholesterol 7-alpha-monooxygenase"/>
    <property type="match status" value="1"/>
</dbReference>
<dbReference type="Gene3D" id="1.10.630.10">
    <property type="entry name" value="Cytochrome P450"/>
    <property type="match status" value="1"/>
</dbReference>
<dbReference type="InterPro" id="IPR030681">
    <property type="entry name" value="Cholesterol_7a_monooxygenase"/>
</dbReference>
<dbReference type="InterPro" id="IPR050529">
    <property type="entry name" value="CYP450_sterol_14alpha_dmase"/>
</dbReference>
<dbReference type="InterPro" id="IPR001128">
    <property type="entry name" value="Cyt_P450"/>
</dbReference>
<dbReference type="InterPro" id="IPR017972">
    <property type="entry name" value="Cyt_P450_CS"/>
</dbReference>
<dbReference type="InterPro" id="IPR024204">
    <property type="entry name" value="Cyt_P450_CYP7A1-type"/>
</dbReference>
<dbReference type="InterPro" id="IPR002403">
    <property type="entry name" value="Cyt_P450_E_grp-IV"/>
</dbReference>
<dbReference type="InterPro" id="IPR036396">
    <property type="entry name" value="Cyt_P450_sf"/>
</dbReference>
<dbReference type="PANTHER" id="PTHR24304:SF1">
    <property type="entry name" value="CYTOCHROME P450 7A1"/>
    <property type="match status" value="1"/>
</dbReference>
<dbReference type="PANTHER" id="PTHR24304">
    <property type="entry name" value="CYTOCHROME P450 FAMILY 7"/>
    <property type="match status" value="1"/>
</dbReference>
<dbReference type="Pfam" id="PF00067">
    <property type="entry name" value="p450"/>
    <property type="match status" value="1"/>
</dbReference>
<dbReference type="PIRSF" id="PIRSF500625">
    <property type="entry name" value="Cytochrome_CYP7A1"/>
    <property type="match status" value="1"/>
</dbReference>
<dbReference type="PIRSF" id="PIRSF000047">
    <property type="entry name" value="Cytochrome_CYPVIIA1"/>
    <property type="match status" value="1"/>
</dbReference>
<dbReference type="PRINTS" id="PR00465">
    <property type="entry name" value="EP450IV"/>
</dbReference>
<dbReference type="SUPFAM" id="SSF48264">
    <property type="entry name" value="Cytochrome P450"/>
    <property type="match status" value="1"/>
</dbReference>
<dbReference type="PROSITE" id="PS00086">
    <property type="entry name" value="CYTOCHROME_P450"/>
    <property type="match status" value="1"/>
</dbReference>
<feature type="chain" id="PRO_0000051904" description="Cytochrome P450 7A1">
    <location>
        <begin position="1"/>
        <end position="501"/>
    </location>
</feature>
<feature type="transmembrane region" description="Helical" evidence="2">
    <location>
        <begin position="4"/>
        <end position="24"/>
    </location>
</feature>
<feature type="binding site" description="axial binding residue" evidence="1">
    <location>
        <position position="441"/>
    </location>
    <ligand>
        <name>heme</name>
        <dbReference type="ChEBI" id="CHEBI:30413"/>
    </ligand>
    <ligandPart>
        <name>Fe</name>
        <dbReference type="ChEBI" id="CHEBI:18248"/>
    </ligandPart>
</feature>
<comment type="function">
    <text evidence="1 6">A cytochrome P450 monooxygenase involved in the metabolism of endogenous cholesterol and its oxygenated derivatives (oxysterols) (By similarity). Mechanistically, uses molecular oxygen inserting one oxygen atom into a substrate, and reducing the second into a water molecule, with two electrons provided by NADPH via cytochrome P450 reductase (CPR; NADPH-ferrihemoprotein reductase) (By similarity). Functions as a critical regulatory enzyme of bile acid biosynthesis and cholesterol homeostasis (Probable). Catalyzes the hydroxylation of carbon hydrogen bond at 7-alpha position of cholesterol, a rate-limiting step in cholesterol catabolism and bile acid biosynthesis (Probable). 7-alpha hydroxylates several oxysterols, including 4beta-hydroxycholesterol and 24-hydroxycholesterol (By similarity). Catalyzes the oxidation of the 7,8 double bond of 7-dehydrocholesterol and lathosterol with direct and predominant formation of the 7-keto derivatives (By similarity).</text>
</comment>
<comment type="catalytic activity">
    <reaction evidence="6">
        <text>cholesterol + reduced [NADPH--hemoprotein reductase] + O2 = 7alpha-hydroxycholesterol + oxidized [NADPH--hemoprotein reductase] + H2O + H(+)</text>
        <dbReference type="Rhea" id="RHEA:21812"/>
        <dbReference type="Rhea" id="RHEA-COMP:11964"/>
        <dbReference type="Rhea" id="RHEA-COMP:11965"/>
        <dbReference type="ChEBI" id="CHEBI:15377"/>
        <dbReference type="ChEBI" id="CHEBI:15378"/>
        <dbReference type="ChEBI" id="CHEBI:15379"/>
        <dbReference type="ChEBI" id="CHEBI:16113"/>
        <dbReference type="ChEBI" id="CHEBI:17500"/>
        <dbReference type="ChEBI" id="CHEBI:57618"/>
        <dbReference type="ChEBI" id="CHEBI:58210"/>
        <dbReference type="EC" id="1.14.14.23"/>
    </reaction>
    <physiologicalReaction direction="left-to-right" evidence="6">
        <dbReference type="Rhea" id="RHEA:21813"/>
    </physiologicalReaction>
</comment>
<comment type="catalytic activity">
    <reaction evidence="1">
        <text>4beta-hydroxycholesterol + reduced [NADPH--hemoprotein reductase] + O2 = 4beta,7alpha-dihydroxycholesterol + oxidized [NADPH--hemoprotein reductase] + H2O + H(+)</text>
        <dbReference type="Rhea" id="RHEA:46120"/>
        <dbReference type="Rhea" id="RHEA-COMP:11964"/>
        <dbReference type="Rhea" id="RHEA-COMP:11965"/>
        <dbReference type="ChEBI" id="CHEBI:15377"/>
        <dbReference type="ChEBI" id="CHEBI:15378"/>
        <dbReference type="ChEBI" id="CHEBI:15379"/>
        <dbReference type="ChEBI" id="CHEBI:57618"/>
        <dbReference type="ChEBI" id="CHEBI:58210"/>
        <dbReference type="ChEBI" id="CHEBI:85778"/>
        <dbReference type="ChEBI" id="CHEBI:85779"/>
    </reaction>
    <physiologicalReaction direction="left-to-right" evidence="1">
        <dbReference type="Rhea" id="RHEA:46121"/>
    </physiologicalReaction>
</comment>
<comment type="catalytic activity">
    <reaction evidence="1">
        <text>lathosterol + reduced [NADPH--hemoprotein reductase] + O2 = 7alpha,8alpha-epoxy-5alpha-cholestan-3beta-ol + oxidized [NADPH--hemoprotein reductase] + H2O + H(+)</text>
        <dbReference type="Rhea" id="RHEA:53256"/>
        <dbReference type="Rhea" id="RHEA-COMP:11964"/>
        <dbReference type="Rhea" id="RHEA-COMP:11965"/>
        <dbReference type="ChEBI" id="CHEBI:15377"/>
        <dbReference type="ChEBI" id="CHEBI:15378"/>
        <dbReference type="ChEBI" id="CHEBI:15379"/>
        <dbReference type="ChEBI" id="CHEBI:17168"/>
        <dbReference type="ChEBI" id="CHEBI:57618"/>
        <dbReference type="ChEBI" id="CHEBI:58210"/>
        <dbReference type="ChEBI" id="CHEBI:137063"/>
    </reaction>
    <physiologicalReaction direction="left-to-right" evidence="1">
        <dbReference type="Rhea" id="RHEA:53257"/>
    </physiologicalReaction>
</comment>
<comment type="catalytic activity">
    <reaction evidence="1">
        <text>lathosterol + reduced [NADPH--hemoprotein reductase] + O2 = 5alpha-cholestan-7-oxo-3beta-ol + oxidized [NADPH--hemoprotein reductase] + H2O + H(+)</text>
        <dbReference type="Rhea" id="RHEA:53252"/>
        <dbReference type="Rhea" id="RHEA-COMP:11964"/>
        <dbReference type="Rhea" id="RHEA-COMP:11965"/>
        <dbReference type="ChEBI" id="CHEBI:15377"/>
        <dbReference type="ChEBI" id="CHEBI:15378"/>
        <dbReference type="ChEBI" id="CHEBI:15379"/>
        <dbReference type="ChEBI" id="CHEBI:17168"/>
        <dbReference type="ChEBI" id="CHEBI:57618"/>
        <dbReference type="ChEBI" id="CHEBI:58210"/>
        <dbReference type="ChEBI" id="CHEBI:137062"/>
    </reaction>
    <physiologicalReaction direction="left-to-right" evidence="1">
        <dbReference type="Rhea" id="RHEA:53253"/>
    </physiologicalReaction>
</comment>
<comment type="catalytic activity">
    <reaction evidence="1">
        <text>7-dehydrocholesterol + reduced [NADPH--hemoprotein reductase] + O2 = 7-oxocholesterol + oxidized [NADPH--hemoprotein reductase] + H2O + H(+)</text>
        <dbReference type="Rhea" id="RHEA:53248"/>
        <dbReference type="Rhea" id="RHEA-COMP:11964"/>
        <dbReference type="Rhea" id="RHEA-COMP:11965"/>
        <dbReference type="ChEBI" id="CHEBI:15377"/>
        <dbReference type="ChEBI" id="CHEBI:15378"/>
        <dbReference type="ChEBI" id="CHEBI:15379"/>
        <dbReference type="ChEBI" id="CHEBI:17759"/>
        <dbReference type="ChEBI" id="CHEBI:57618"/>
        <dbReference type="ChEBI" id="CHEBI:58210"/>
        <dbReference type="ChEBI" id="CHEBI:64294"/>
    </reaction>
    <physiologicalReaction direction="left-to-right" evidence="1">
        <dbReference type="Rhea" id="RHEA:53249"/>
    </physiologicalReaction>
</comment>
<comment type="catalytic activity">
    <reaction evidence="1">
        <text>(24S)-hydroxycholesterol + reduced [NADPH--hemoprotein reductase] + O2 = (24S)-7alpha-dihydroxycholesterol + oxidized [NADPH--hemoprotein reductase] + H2O + H(+)</text>
        <dbReference type="Rhea" id="RHEA:46124"/>
        <dbReference type="Rhea" id="RHEA-COMP:11964"/>
        <dbReference type="Rhea" id="RHEA-COMP:11965"/>
        <dbReference type="ChEBI" id="CHEBI:15377"/>
        <dbReference type="ChEBI" id="CHEBI:15378"/>
        <dbReference type="ChEBI" id="CHEBI:15379"/>
        <dbReference type="ChEBI" id="CHEBI:34310"/>
        <dbReference type="ChEBI" id="CHEBI:37640"/>
        <dbReference type="ChEBI" id="CHEBI:57618"/>
        <dbReference type="ChEBI" id="CHEBI:58210"/>
        <dbReference type="EC" id="1.14.14.26"/>
    </reaction>
    <physiologicalReaction direction="left-to-right" evidence="1">
        <dbReference type="Rhea" id="RHEA:46125"/>
    </physiologicalReaction>
</comment>
<comment type="catalytic activity">
    <reaction evidence="1">
        <text>(24R)-hydroxycholesterol + reduced [NADPH--hemoprotein reductase] + O2 = (24R)-7alpha-dihydroxycholesterol + oxidized [NADPH--hemoprotein reductase] + H2O + H(+)</text>
        <dbReference type="Rhea" id="RHEA:16093"/>
        <dbReference type="Rhea" id="RHEA-COMP:11964"/>
        <dbReference type="Rhea" id="RHEA-COMP:11965"/>
        <dbReference type="ChEBI" id="CHEBI:15377"/>
        <dbReference type="ChEBI" id="CHEBI:15378"/>
        <dbReference type="ChEBI" id="CHEBI:15379"/>
        <dbReference type="ChEBI" id="CHEBI:50516"/>
        <dbReference type="ChEBI" id="CHEBI:50518"/>
        <dbReference type="ChEBI" id="CHEBI:57618"/>
        <dbReference type="ChEBI" id="CHEBI:58210"/>
    </reaction>
    <physiologicalReaction direction="left-to-right" evidence="1">
        <dbReference type="Rhea" id="RHEA:16094"/>
    </physiologicalReaction>
</comment>
<comment type="cofactor">
    <cofactor evidence="1">
        <name>heme</name>
        <dbReference type="ChEBI" id="CHEBI:30413"/>
    </cofactor>
</comment>
<comment type="pathway">
    <text evidence="6">Lipid metabolism; bile acid biosynthesis.</text>
</comment>
<comment type="pathway">
    <text evidence="6">Steroid metabolism; cholesterol degradation.</text>
</comment>
<comment type="subcellular location">
    <subcellularLocation>
        <location evidence="1">Endoplasmic reticulum membrane</location>
        <topology evidence="1">Single-pass membrane protein</topology>
    </subcellularLocation>
    <subcellularLocation>
        <location evidence="1">Microsome membrane</location>
        <topology evidence="1">Single-pass membrane protein</topology>
    </subcellularLocation>
</comment>
<comment type="tissue specificity">
    <text evidence="3">Detected in liver.</text>
</comment>
<comment type="similarity">
    <text evidence="5">Belongs to the cytochrome P450 family.</text>
</comment>
<sequence>MITIFWIWGICLSVCCCLWLILGLRRRRMGEPPLEKGWIPYLGCALQFGANPLDFLRANQRKYGHVFTCKLMGKYVHFITNSLSYHKVLCHGKYFDWKKFHFTTSAKAFGHRSIDPRDGNTTENINNTFNKTLQGDALISLTDAMMENLQLTLRRPEPKSRAWVTEGMYSFCYRVMFEAGYLTLFGRELTRQDAQRAFILNSLEDFKQFDKVFPALVAGLPIHIFMTAHNAREKLAEGLKHDNLRTRDHISELIRLRMFLNDTLSTFDAMEKAKTHLAILWASQANTIPATFWSLFHMMRSSEALKAATEEVNKALEDADQQINFEGKPIHLNQTQLNDMPVLDSIIKESLRLSSASLNIRTAKEDFTLHLEDGSYNIRKDDIIALYPQLMHLDPEIYPDPMTFKYDRYLDENRKTKTTFYSKGLKLKYYYMPFGSGATICPGRLFAIQEIKQFLILMLSYFELEFVDSHVKCPPLDQSRAGLGILPPLNDIEFKYKFKHL</sequence>
<reference key="1">
    <citation type="journal article" date="1995" name="J. Lipid Res.">
        <title>Synchronous circadian rhythms of mRNA levels and activities of cholesterol 7 alpha-hydroxylase in the rabbit and rat.</title>
        <authorList>
            <person name="Kai M."/>
            <person name="Eto T."/>
            <person name="Kondo K."/>
            <person name="Setoguchi Y."/>
            <person name="Higashi S."/>
            <person name="Maeda Y."/>
            <person name="Setoguchi T."/>
        </authorList>
    </citation>
    <scope>NUCLEOTIDE SEQUENCE [MRNA]</scope>
    <scope>CATALYTIC ACTIVITY</scope>
    <scope>TISSUE SPECIFICITY</scope>
    <source>
        <strain>New Zealand white</strain>
        <tissue>Liver</tissue>
    </source>
</reference>
<evidence type="ECO:0000250" key="1">
    <source>
        <dbReference type="UniProtKB" id="P22680"/>
    </source>
</evidence>
<evidence type="ECO:0000255" key="2"/>
<evidence type="ECO:0000269" key="3">
    <source>
    </source>
</evidence>
<evidence type="ECO:0000303" key="4">
    <source>
    </source>
</evidence>
<evidence type="ECO:0000305" key="5"/>
<evidence type="ECO:0000305" key="6">
    <source>
    </source>
</evidence>
<gene>
    <name type="primary">CYP7A1</name>
    <name type="synonym">CYP7</name>
</gene>
<organism>
    <name type="scientific">Oryctolagus cuniculus</name>
    <name type="common">Rabbit</name>
    <dbReference type="NCBI Taxonomy" id="9986"/>
    <lineage>
        <taxon>Eukaryota</taxon>
        <taxon>Metazoa</taxon>
        <taxon>Chordata</taxon>
        <taxon>Craniata</taxon>
        <taxon>Vertebrata</taxon>
        <taxon>Euteleostomi</taxon>
        <taxon>Mammalia</taxon>
        <taxon>Eutheria</taxon>
        <taxon>Euarchontoglires</taxon>
        <taxon>Glires</taxon>
        <taxon>Lagomorpha</taxon>
        <taxon>Leporidae</taxon>
        <taxon>Oryctolagus</taxon>
    </lineage>
</organism>
<protein>
    <recommendedName>
        <fullName evidence="1">Cytochrome P450 7A1</fullName>
    </recommendedName>
    <alternativeName>
        <fullName evidence="1">24-hydroxycholesterol 7-alpha-hydroxylase</fullName>
        <ecNumber evidence="1">1.14.14.26</ecNumber>
    </alternativeName>
    <alternativeName>
        <fullName>CYPVII</fullName>
    </alternativeName>
    <alternativeName>
        <fullName evidence="4">Cholesterol 7-alpha-hydroxylase</fullName>
    </alternativeName>
    <alternativeName>
        <fullName>Cholesterol 7-alpha-monooxygenase</fullName>
        <ecNumber evidence="3">1.14.14.23</ecNumber>
    </alternativeName>
</protein>
<keyword id="KW-0153">Cholesterol metabolism</keyword>
<keyword id="KW-0256">Endoplasmic reticulum</keyword>
<keyword id="KW-0349">Heme</keyword>
<keyword id="KW-0408">Iron</keyword>
<keyword id="KW-0443">Lipid metabolism</keyword>
<keyword id="KW-0472">Membrane</keyword>
<keyword id="KW-0479">Metal-binding</keyword>
<keyword id="KW-0492">Microsome</keyword>
<keyword id="KW-0503">Monooxygenase</keyword>
<keyword id="KW-0560">Oxidoreductase</keyword>
<keyword id="KW-1185">Reference proteome</keyword>
<keyword id="KW-0753">Steroid metabolism</keyword>
<keyword id="KW-1207">Sterol metabolism</keyword>
<keyword id="KW-0812">Transmembrane</keyword>
<keyword id="KW-1133">Transmembrane helix</keyword>
<accession>P51542</accession>